<keyword id="KW-0012">Acyltransferase</keyword>
<keyword id="KW-0963">Cytoplasm</keyword>
<keyword id="KW-0808">Transferase</keyword>
<accession>A1KKQ9</accession>
<protein>
    <recommendedName>
        <fullName evidence="1">Octanoyltransferase</fullName>
        <ecNumber evidence="1">2.3.1.181</ecNumber>
    </recommendedName>
    <alternativeName>
        <fullName evidence="1">Lipoate-protein ligase B</fullName>
    </alternativeName>
    <alternativeName>
        <fullName evidence="1">Lipoyl/octanoyl transferase</fullName>
    </alternativeName>
    <alternativeName>
        <fullName evidence="1">Octanoyl-[acyl-carrier-protein]-protein N-octanoyltransferase</fullName>
    </alternativeName>
</protein>
<dbReference type="EC" id="2.3.1.181" evidence="1"/>
<dbReference type="EMBL" id="AM408590">
    <property type="protein sequence ID" value="CAL72221.1"/>
    <property type="molecule type" value="Genomic_DNA"/>
</dbReference>
<dbReference type="RefSeq" id="WP_010950674.1">
    <property type="nucleotide sequence ID" value="NC_008769.1"/>
</dbReference>
<dbReference type="SMR" id="A1KKQ9"/>
<dbReference type="KEGG" id="mbb:BCG_2233"/>
<dbReference type="HOGENOM" id="CLU_035168_2_1_11"/>
<dbReference type="UniPathway" id="UPA00538">
    <property type="reaction ID" value="UER00592"/>
</dbReference>
<dbReference type="Proteomes" id="UP000001472">
    <property type="component" value="Chromosome"/>
</dbReference>
<dbReference type="GO" id="GO:0005737">
    <property type="term" value="C:cytoplasm"/>
    <property type="evidence" value="ECO:0007669"/>
    <property type="project" value="UniProtKB-SubCell"/>
</dbReference>
<dbReference type="GO" id="GO:0033819">
    <property type="term" value="F:lipoyl(octanoyl) transferase activity"/>
    <property type="evidence" value="ECO:0007669"/>
    <property type="project" value="UniProtKB-EC"/>
</dbReference>
<dbReference type="GO" id="GO:0036211">
    <property type="term" value="P:protein modification process"/>
    <property type="evidence" value="ECO:0007669"/>
    <property type="project" value="InterPro"/>
</dbReference>
<dbReference type="CDD" id="cd16444">
    <property type="entry name" value="LipB"/>
    <property type="match status" value="1"/>
</dbReference>
<dbReference type="FunFam" id="3.30.930.10:FF:000035">
    <property type="entry name" value="Putative lipoyltransferase 2, mitochondrial"/>
    <property type="match status" value="1"/>
</dbReference>
<dbReference type="Gene3D" id="3.30.930.10">
    <property type="entry name" value="Bira Bifunctional Protein, Domain 2"/>
    <property type="match status" value="1"/>
</dbReference>
<dbReference type="HAMAP" id="MF_00013">
    <property type="entry name" value="LipB"/>
    <property type="match status" value="1"/>
</dbReference>
<dbReference type="InterPro" id="IPR045864">
    <property type="entry name" value="aa-tRNA-synth_II/BPL/LPL"/>
</dbReference>
<dbReference type="InterPro" id="IPR004143">
    <property type="entry name" value="BPL_LPL_catalytic"/>
</dbReference>
<dbReference type="InterPro" id="IPR000544">
    <property type="entry name" value="Octanoyltransferase"/>
</dbReference>
<dbReference type="InterPro" id="IPR020605">
    <property type="entry name" value="Octanoyltransferase_CS"/>
</dbReference>
<dbReference type="NCBIfam" id="TIGR00214">
    <property type="entry name" value="lipB"/>
    <property type="match status" value="1"/>
</dbReference>
<dbReference type="NCBIfam" id="NF010925">
    <property type="entry name" value="PRK14345.1"/>
    <property type="match status" value="1"/>
</dbReference>
<dbReference type="PANTHER" id="PTHR10993:SF7">
    <property type="entry name" value="LIPOYLTRANSFERASE 2, MITOCHONDRIAL-RELATED"/>
    <property type="match status" value="1"/>
</dbReference>
<dbReference type="PANTHER" id="PTHR10993">
    <property type="entry name" value="OCTANOYLTRANSFERASE"/>
    <property type="match status" value="1"/>
</dbReference>
<dbReference type="Pfam" id="PF21948">
    <property type="entry name" value="LplA-B_cat"/>
    <property type="match status" value="1"/>
</dbReference>
<dbReference type="PIRSF" id="PIRSF016262">
    <property type="entry name" value="LPLase"/>
    <property type="match status" value="1"/>
</dbReference>
<dbReference type="SUPFAM" id="SSF55681">
    <property type="entry name" value="Class II aaRS and biotin synthetases"/>
    <property type="match status" value="1"/>
</dbReference>
<dbReference type="PROSITE" id="PS51733">
    <property type="entry name" value="BPL_LPL_CATALYTIC"/>
    <property type="match status" value="1"/>
</dbReference>
<dbReference type="PROSITE" id="PS01313">
    <property type="entry name" value="LIPB"/>
    <property type="match status" value="1"/>
</dbReference>
<reference key="1">
    <citation type="journal article" date="2007" name="Proc. Natl. Acad. Sci. U.S.A.">
        <title>Genome plasticity of BCG and impact on vaccine efficacy.</title>
        <authorList>
            <person name="Brosch R."/>
            <person name="Gordon S.V."/>
            <person name="Garnier T."/>
            <person name="Eiglmeier K."/>
            <person name="Frigui W."/>
            <person name="Valenti P."/>
            <person name="Dos Santos S."/>
            <person name="Duthoy S."/>
            <person name="Lacroix C."/>
            <person name="Garcia-Pelayo C."/>
            <person name="Inwald J.K."/>
            <person name="Golby P."/>
            <person name="Garcia J.N."/>
            <person name="Hewinson R.G."/>
            <person name="Behr M.A."/>
            <person name="Quail M.A."/>
            <person name="Churcher C."/>
            <person name="Barrell B.G."/>
            <person name="Parkhill J."/>
            <person name="Cole S.T."/>
        </authorList>
    </citation>
    <scope>NUCLEOTIDE SEQUENCE [LARGE SCALE GENOMIC DNA]</scope>
    <source>
        <strain>BCG / Pasteur 1173P2</strain>
    </source>
</reference>
<proteinExistence type="inferred from homology"/>
<organism>
    <name type="scientific">Mycobacterium bovis (strain BCG / Pasteur 1173P2)</name>
    <dbReference type="NCBI Taxonomy" id="410289"/>
    <lineage>
        <taxon>Bacteria</taxon>
        <taxon>Bacillati</taxon>
        <taxon>Actinomycetota</taxon>
        <taxon>Actinomycetes</taxon>
        <taxon>Mycobacteriales</taxon>
        <taxon>Mycobacteriaceae</taxon>
        <taxon>Mycobacterium</taxon>
        <taxon>Mycobacterium tuberculosis complex</taxon>
    </lineage>
</organism>
<gene>
    <name evidence="1" type="primary">lipB</name>
    <name type="ordered locus">BCG_2233</name>
</gene>
<evidence type="ECO:0000255" key="1">
    <source>
        <dbReference type="HAMAP-Rule" id="MF_00013"/>
    </source>
</evidence>
<evidence type="ECO:0000255" key="2">
    <source>
        <dbReference type="PROSITE-ProRule" id="PRU01067"/>
    </source>
</evidence>
<sequence>MTGSIRSKLSAIDVRQLGTVDYRTAWQLQRELADARVAGGADTLLLLEHPAVYTAGRRTETHERPIDGTPVVGTDRGGKITWHGPGQLVGYPIIGLAEPLDVVNYVRRLEESLIQVCADLGLHAGRVDGRSGVWLPGRPARKVAAIGVRVSRATTLHGFALNCDCDLAAFTAIVPCGISDAAVTSLSAELGRTVTVDEVRATVAAAVCAALDGVLPVGDRVPSHAVPSPL</sequence>
<name>LIPB_MYCBP</name>
<feature type="chain" id="PRO_1000001108" description="Octanoyltransferase">
    <location>
        <begin position="1"/>
        <end position="230"/>
    </location>
</feature>
<feature type="domain" description="BPL/LPL catalytic" evidence="2">
    <location>
        <begin position="38"/>
        <end position="215"/>
    </location>
</feature>
<feature type="active site" description="Acyl-thioester intermediate" evidence="1">
    <location>
        <position position="176"/>
    </location>
</feature>
<feature type="binding site" evidence="1">
    <location>
        <begin position="76"/>
        <end position="83"/>
    </location>
    <ligand>
        <name>substrate</name>
    </ligand>
</feature>
<feature type="binding site" evidence="1">
    <location>
        <begin position="145"/>
        <end position="147"/>
    </location>
    <ligand>
        <name>substrate</name>
    </ligand>
</feature>
<feature type="binding site" evidence="1">
    <location>
        <begin position="158"/>
        <end position="160"/>
    </location>
    <ligand>
        <name>substrate</name>
    </ligand>
</feature>
<feature type="site" description="Lowers pKa of active site Cys" evidence="1">
    <location>
        <position position="142"/>
    </location>
</feature>
<comment type="function">
    <text evidence="1">Catalyzes the transfer of endogenously produced octanoic acid from octanoyl-acyl-carrier-protein onto the lipoyl domains of lipoate-dependent enzymes. Lipoyl-ACP can also act as a substrate although octanoyl-ACP is likely to be the physiological substrate.</text>
</comment>
<comment type="catalytic activity">
    <reaction evidence="1">
        <text>octanoyl-[ACP] + L-lysyl-[protein] = N(6)-octanoyl-L-lysyl-[protein] + holo-[ACP] + H(+)</text>
        <dbReference type="Rhea" id="RHEA:17665"/>
        <dbReference type="Rhea" id="RHEA-COMP:9636"/>
        <dbReference type="Rhea" id="RHEA-COMP:9685"/>
        <dbReference type="Rhea" id="RHEA-COMP:9752"/>
        <dbReference type="Rhea" id="RHEA-COMP:9928"/>
        <dbReference type="ChEBI" id="CHEBI:15378"/>
        <dbReference type="ChEBI" id="CHEBI:29969"/>
        <dbReference type="ChEBI" id="CHEBI:64479"/>
        <dbReference type="ChEBI" id="CHEBI:78463"/>
        <dbReference type="ChEBI" id="CHEBI:78809"/>
        <dbReference type="EC" id="2.3.1.181"/>
    </reaction>
</comment>
<comment type="pathway">
    <text evidence="1">Protein modification; protein lipoylation via endogenous pathway; protein N(6)-(lipoyl)lysine from octanoyl-[acyl-carrier-protein]: step 1/2.</text>
</comment>
<comment type="subcellular location">
    <subcellularLocation>
        <location evidence="1">Cytoplasm</location>
    </subcellularLocation>
</comment>
<comment type="miscellaneous">
    <text evidence="1">In the reaction, the free carboxyl group of octanoic acid is attached via an amide linkage to the epsilon-amino group of a specific lysine residue of lipoyl domains of lipoate-dependent enzymes.</text>
</comment>
<comment type="similarity">
    <text evidence="1">Belongs to the LipB family.</text>
</comment>